<accession>A0QQ44</accession>
<organism>
    <name type="scientific">Mycolicibacterium smegmatis (strain ATCC 700084 / mc(2)155)</name>
    <name type="common">Mycobacterium smegmatis</name>
    <dbReference type="NCBI Taxonomy" id="246196"/>
    <lineage>
        <taxon>Bacteria</taxon>
        <taxon>Bacillati</taxon>
        <taxon>Actinomycetota</taxon>
        <taxon>Actinomycetes</taxon>
        <taxon>Mycobacteriales</taxon>
        <taxon>Mycobacteriaceae</taxon>
        <taxon>Mycolicibacterium</taxon>
    </lineage>
</organism>
<name>ESXH_MYCS2</name>
<comment type="subunit">
    <text evidence="2">Forms a tight 1:1 complex with EsxG.</text>
</comment>
<comment type="subcellular location">
    <subcellularLocation>
        <location evidence="1 3">Secreted</location>
    </subcellularLocation>
    <text evidence="1 3">Secreted via the ESX-3 / type VII secretion system (T7SS).</text>
</comment>
<comment type="similarity">
    <text evidence="5">Belongs to the WXG100 family. ESAT-6 subfamily.</text>
</comment>
<gene>
    <name evidence="4" type="primary">esxH</name>
    <name evidence="6" type="ordered locus">MSMEG_0621</name>
    <name evidence="7" type="ordered locus">MSMEI_0605</name>
</gene>
<dbReference type="EMBL" id="CP000480">
    <property type="protein sequence ID" value="ABK72724.1"/>
    <property type="molecule type" value="Genomic_DNA"/>
</dbReference>
<dbReference type="EMBL" id="CP001663">
    <property type="protein sequence ID" value="AFP37086.1"/>
    <property type="molecule type" value="Genomic_DNA"/>
</dbReference>
<dbReference type="RefSeq" id="WP_003892041.1">
    <property type="nucleotide sequence ID" value="NZ_SIJM01000009.1"/>
</dbReference>
<dbReference type="RefSeq" id="YP_885032.1">
    <property type="nucleotide sequence ID" value="NC_008596.1"/>
</dbReference>
<dbReference type="PDB" id="3Q4H">
    <property type="method" value="X-ray"/>
    <property type="resolution" value="2.70 A"/>
    <property type="chains" value="B/D=1-95"/>
</dbReference>
<dbReference type="PDBsum" id="3Q4H"/>
<dbReference type="SMR" id="A0QQ44"/>
<dbReference type="STRING" id="246196.MSMEG_0621"/>
<dbReference type="PaxDb" id="246196-MSMEI_0605"/>
<dbReference type="KEGG" id="msb:LJ00_03085"/>
<dbReference type="KEGG" id="msg:MSMEI_0605"/>
<dbReference type="KEGG" id="msm:MSMEG_0621"/>
<dbReference type="PATRIC" id="fig|246196.19.peg.617"/>
<dbReference type="eggNOG" id="COG4842">
    <property type="taxonomic scope" value="Bacteria"/>
</dbReference>
<dbReference type="OrthoDB" id="4738087at2"/>
<dbReference type="EvolutionaryTrace" id="A0QQ44"/>
<dbReference type="Proteomes" id="UP000000757">
    <property type="component" value="Chromosome"/>
</dbReference>
<dbReference type="Proteomes" id="UP000006158">
    <property type="component" value="Chromosome"/>
</dbReference>
<dbReference type="GO" id="GO:0005576">
    <property type="term" value="C:extracellular region"/>
    <property type="evidence" value="ECO:0007669"/>
    <property type="project" value="UniProtKB-SubCell"/>
</dbReference>
<dbReference type="Gene3D" id="1.10.287.1060">
    <property type="entry name" value="ESAT-6-like"/>
    <property type="match status" value="1"/>
</dbReference>
<dbReference type="InterPro" id="IPR036689">
    <property type="entry name" value="ESAT-6-like_sf"/>
</dbReference>
<dbReference type="InterPro" id="IPR010310">
    <property type="entry name" value="T7SS_ESAT-6-like"/>
</dbReference>
<dbReference type="NCBIfam" id="TIGR03930">
    <property type="entry name" value="WXG100_ESAT6"/>
    <property type="match status" value="1"/>
</dbReference>
<dbReference type="Pfam" id="PF06013">
    <property type="entry name" value="WXG100"/>
    <property type="match status" value="1"/>
</dbReference>
<dbReference type="SUPFAM" id="SSF140453">
    <property type="entry name" value="EsxAB dimer-like"/>
    <property type="match status" value="1"/>
</dbReference>
<evidence type="ECO:0000269" key="1">
    <source>
    </source>
</evidence>
<evidence type="ECO:0000269" key="2">
    <source>
    </source>
</evidence>
<evidence type="ECO:0000269" key="3">
    <source>
    </source>
</evidence>
<evidence type="ECO:0000303" key="4">
    <source>
    </source>
</evidence>
<evidence type="ECO:0000305" key="5"/>
<evidence type="ECO:0000312" key="6">
    <source>
        <dbReference type="EMBL" id="ABK72724.1"/>
    </source>
</evidence>
<evidence type="ECO:0000312" key="7">
    <source>
        <dbReference type="EMBL" id="AFP37086.1"/>
    </source>
</evidence>
<evidence type="ECO:0007744" key="8">
    <source>
        <dbReference type="PDB" id="3Q4H"/>
    </source>
</evidence>
<evidence type="ECO:0007829" key="9">
    <source>
        <dbReference type="PDB" id="3Q4H"/>
    </source>
</evidence>
<feature type="chain" id="PRO_0000434999" description="ESAT-6-like protein EsxH">
    <location>
        <begin position="1"/>
        <end position="95"/>
    </location>
</feature>
<feature type="helix" evidence="9">
    <location>
        <begin position="3"/>
        <end position="6"/>
    </location>
</feature>
<feature type="helix" evidence="9">
    <location>
        <begin position="8"/>
        <end position="38"/>
    </location>
</feature>
<feature type="helix" evidence="9">
    <location>
        <begin position="40"/>
        <end position="42"/>
    </location>
</feature>
<feature type="strand" evidence="9">
    <location>
        <begin position="46"/>
        <end position="48"/>
    </location>
</feature>
<feature type="helix" evidence="9">
    <location>
        <begin position="51"/>
        <end position="85"/>
    </location>
</feature>
<keyword id="KW-0002">3D-structure</keyword>
<keyword id="KW-1185">Reference proteome</keyword>
<keyword id="KW-0964">Secreted</keyword>
<sequence length="95" mass="10470">MSQIMYNYPAMLAHAAEMNTYSGALHAVGADIAAEQHALASAWQGDTGMTYQAWQAQWNQAMEELVRAYRAMATTHEQNTMAMSARDQAEGAKWG</sequence>
<proteinExistence type="evidence at protein level"/>
<protein>
    <recommendedName>
        <fullName evidence="5">ESAT-6-like protein EsxH</fullName>
    </recommendedName>
</protein>
<reference key="1">
    <citation type="submission" date="2006-10" db="EMBL/GenBank/DDBJ databases">
        <authorList>
            <person name="Fleischmann R.D."/>
            <person name="Dodson R.J."/>
            <person name="Haft D.H."/>
            <person name="Merkel J.S."/>
            <person name="Nelson W.C."/>
            <person name="Fraser C.M."/>
        </authorList>
    </citation>
    <scope>NUCLEOTIDE SEQUENCE [LARGE SCALE GENOMIC DNA]</scope>
    <source>
        <strain>ATCC 700084 / mc(2)155</strain>
    </source>
</reference>
<reference key="2">
    <citation type="journal article" date="2007" name="Genome Biol.">
        <title>Interrupted coding sequences in Mycobacterium smegmatis: authentic mutations or sequencing errors?</title>
        <authorList>
            <person name="Deshayes C."/>
            <person name="Perrodou E."/>
            <person name="Gallien S."/>
            <person name="Euphrasie D."/>
            <person name="Schaeffer C."/>
            <person name="Van-Dorsselaer A."/>
            <person name="Poch O."/>
            <person name="Lecompte O."/>
            <person name="Reyrat J.-M."/>
        </authorList>
    </citation>
    <scope>NUCLEOTIDE SEQUENCE [LARGE SCALE GENOMIC DNA]</scope>
    <source>
        <strain>ATCC 700084 / mc(2)155</strain>
    </source>
</reference>
<reference key="3">
    <citation type="journal article" date="2009" name="Genome Res.">
        <title>Ortho-proteogenomics: multiple proteomes investigation through orthology and a new MS-based protocol.</title>
        <authorList>
            <person name="Gallien S."/>
            <person name="Perrodou E."/>
            <person name="Carapito C."/>
            <person name="Deshayes C."/>
            <person name="Reyrat J.-M."/>
            <person name="Van Dorsselaer A."/>
            <person name="Poch O."/>
            <person name="Schaeffer C."/>
            <person name="Lecompte O."/>
        </authorList>
    </citation>
    <scope>NUCLEOTIDE SEQUENCE [LARGE SCALE GENOMIC DNA]</scope>
    <source>
        <strain>ATCC 700084 / mc(2)155</strain>
    </source>
</reference>
<reference key="4">
    <citation type="journal article" date="2009" name="Proc. Natl. Acad. Sci. U.S.A.">
        <title>Mycobacterial Esx-3 is required for mycobactin-mediated iron acquisition.</title>
        <authorList>
            <person name="Siegrist M.S."/>
            <person name="Unnikrishnan M."/>
            <person name="McConnell M.J."/>
            <person name="Borowsky M."/>
            <person name="Cheng T.Y."/>
            <person name="Siddiqi N."/>
            <person name="Fortune S.M."/>
            <person name="Moody D.B."/>
            <person name="Rubin E.J."/>
        </authorList>
    </citation>
    <scope>SUBCELLULAR LOCATION</scope>
</reference>
<reference key="5">
    <citation type="journal article" date="2014" name="MBio">
        <title>Mycobacterial Esx-3 requires multiple components for iron acquisition.</title>
        <authorList>
            <person name="Siegrist M.S."/>
            <person name="Steigedal M."/>
            <person name="Ahmad R."/>
            <person name="Mehra A."/>
            <person name="Dragset M.S."/>
            <person name="Schuster B.M."/>
            <person name="Philips J.A."/>
            <person name="Carr S.A."/>
            <person name="Rubin E.J."/>
        </authorList>
    </citation>
    <scope>SUBCELLULAR LOCATION</scope>
</reference>
<reference evidence="8" key="6">
    <citation type="journal article" date="2013" name="PLoS ONE">
        <title>Heterologous expression of mycobacterial Esx complexes in Escherichia coli for structural studies is facilitated by the use of maltose binding protein fusions.</title>
        <authorList>
            <person name="Arbing M.A."/>
            <person name="Chan S."/>
            <person name="Harris L."/>
            <person name="Kuo E."/>
            <person name="Zhou T.T."/>
            <person name="Ahn C.J."/>
            <person name="Nguyen L."/>
            <person name="He Q."/>
            <person name="Lu J."/>
            <person name="Menchavez P.T."/>
            <person name="Shin A."/>
            <person name="Holton T."/>
            <person name="Sawaya M.R."/>
            <person name="Cascio D."/>
            <person name="Eisenberg D."/>
        </authorList>
    </citation>
    <scope>X-RAY CRYSTALLOGRAPHY (2.70 ANGSTROMS) IN COMPLEX WITH ESXG</scope>
</reference>